<keyword id="KW-1185">Reference proteome</keyword>
<accession>Q55GM9</accession>
<dbReference type="EMBL" id="AAFI02000003">
    <property type="protein sequence ID" value="EAL73598.1"/>
    <property type="molecule type" value="Genomic_DNA"/>
</dbReference>
<dbReference type="RefSeq" id="XP_647155.1">
    <property type="nucleotide sequence ID" value="XM_642063.1"/>
</dbReference>
<dbReference type="PaxDb" id="44689-DDB0202087"/>
<dbReference type="EnsemblProtists" id="EAL73598">
    <property type="protein sequence ID" value="EAL73598"/>
    <property type="gene ID" value="DDB_G0268290"/>
</dbReference>
<dbReference type="GeneID" id="8615958"/>
<dbReference type="KEGG" id="ddi:DDB_G0268290"/>
<dbReference type="dictyBase" id="DDB_G0268290"/>
<dbReference type="VEuPathDB" id="AmoebaDB:DDB_G0268290"/>
<dbReference type="HOGENOM" id="CLU_2927405_0_0_1"/>
<dbReference type="InParanoid" id="Q55GM9"/>
<dbReference type="PRO" id="PR:Q55GM9"/>
<dbReference type="Proteomes" id="UP000002195">
    <property type="component" value="Chromosome 1"/>
</dbReference>
<sequence length="61" mass="7132">MIFAIDLIKSNCKREILKIKKIKINYLFYGNCRYLINMINLKSSTTRILQPLDSVVISHDS</sequence>
<gene>
    <name type="ORF">DDB_G0268290</name>
</gene>
<feature type="chain" id="PRO_0000348085" description="Putative uncharacterized protein DDB_G0268290">
    <location>
        <begin position="1"/>
        <end position="61"/>
    </location>
</feature>
<protein>
    <recommendedName>
        <fullName>Putative uncharacterized protein DDB_G0268290</fullName>
    </recommendedName>
</protein>
<reference key="1">
    <citation type="journal article" date="2005" name="Nature">
        <title>The genome of the social amoeba Dictyostelium discoideum.</title>
        <authorList>
            <person name="Eichinger L."/>
            <person name="Pachebat J.A."/>
            <person name="Gloeckner G."/>
            <person name="Rajandream M.A."/>
            <person name="Sucgang R."/>
            <person name="Berriman M."/>
            <person name="Song J."/>
            <person name="Olsen R."/>
            <person name="Szafranski K."/>
            <person name="Xu Q."/>
            <person name="Tunggal B."/>
            <person name="Kummerfeld S."/>
            <person name="Madera M."/>
            <person name="Konfortov B.A."/>
            <person name="Rivero F."/>
            <person name="Bankier A.T."/>
            <person name="Lehmann R."/>
            <person name="Hamlin N."/>
            <person name="Davies R."/>
            <person name="Gaudet P."/>
            <person name="Fey P."/>
            <person name="Pilcher K."/>
            <person name="Chen G."/>
            <person name="Saunders D."/>
            <person name="Sodergren E.J."/>
            <person name="Davis P."/>
            <person name="Kerhornou A."/>
            <person name="Nie X."/>
            <person name="Hall N."/>
            <person name="Anjard C."/>
            <person name="Hemphill L."/>
            <person name="Bason N."/>
            <person name="Farbrother P."/>
            <person name="Desany B."/>
            <person name="Just E."/>
            <person name="Morio T."/>
            <person name="Rost R."/>
            <person name="Churcher C.M."/>
            <person name="Cooper J."/>
            <person name="Haydock S."/>
            <person name="van Driessche N."/>
            <person name="Cronin A."/>
            <person name="Goodhead I."/>
            <person name="Muzny D.M."/>
            <person name="Mourier T."/>
            <person name="Pain A."/>
            <person name="Lu M."/>
            <person name="Harper D."/>
            <person name="Lindsay R."/>
            <person name="Hauser H."/>
            <person name="James K.D."/>
            <person name="Quiles M."/>
            <person name="Madan Babu M."/>
            <person name="Saito T."/>
            <person name="Buchrieser C."/>
            <person name="Wardroper A."/>
            <person name="Felder M."/>
            <person name="Thangavelu M."/>
            <person name="Johnson D."/>
            <person name="Knights A."/>
            <person name="Loulseged H."/>
            <person name="Mungall K.L."/>
            <person name="Oliver K."/>
            <person name="Price C."/>
            <person name="Quail M.A."/>
            <person name="Urushihara H."/>
            <person name="Hernandez J."/>
            <person name="Rabbinowitsch E."/>
            <person name="Steffen D."/>
            <person name="Sanders M."/>
            <person name="Ma J."/>
            <person name="Kohara Y."/>
            <person name="Sharp S."/>
            <person name="Simmonds M.N."/>
            <person name="Spiegler S."/>
            <person name="Tivey A."/>
            <person name="Sugano S."/>
            <person name="White B."/>
            <person name="Walker D."/>
            <person name="Woodward J.R."/>
            <person name="Winckler T."/>
            <person name="Tanaka Y."/>
            <person name="Shaulsky G."/>
            <person name="Schleicher M."/>
            <person name="Weinstock G.M."/>
            <person name="Rosenthal A."/>
            <person name="Cox E.C."/>
            <person name="Chisholm R.L."/>
            <person name="Gibbs R.A."/>
            <person name="Loomis W.F."/>
            <person name="Platzer M."/>
            <person name="Kay R.R."/>
            <person name="Williams J.G."/>
            <person name="Dear P.H."/>
            <person name="Noegel A.A."/>
            <person name="Barrell B.G."/>
            <person name="Kuspa A."/>
        </authorList>
    </citation>
    <scope>NUCLEOTIDE SEQUENCE [LARGE SCALE GENOMIC DNA]</scope>
    <source>
        <strain>AX4</strain>
    </source>
</reference>
<proteinExistence type="predicted"/>
<name>Y2087_DICDI</name>
<organism>
    <name type="scientific">Dictyostelium discoideum</name>
    <name type="common">Social amoeba</name>
    <dbReference type="NCBI Taxonomy" id="44689"/>
    <lineage>
        <taxon>Eukaryota</taxon>
        <taxon>Amoebozoa</taxon>
        <taxon>Evosea</taxon>
        <taxon>Eumycetozoa</taxon>
        <taxon>Dictyostelia</taxon>
        <taxon>Dictyosteliales</taxon>
        <taxon>Dictyosteliaceae</taxon>
        <taxon>Dictyostelium</taxon>
    </lineage>
</organism>